<feature type="chain" id="PRO_1000214802" description="Small ribosomal subunit protein uS17">
    <location>
        <begin position="1"/>
        <end position="89"/>
    </location>
</feature>
<organism>
    <name type="scientific">Variovorax paradoxus (strain S110)</name>
    <dbReference type="NCBI Taxonomy" id="543728"/>
    <lineage>
        <taxon>Bacteria</taxon>
        <taxon>Pseudomonadati</taxon>
        <taxon>Pseudomonadota</taxon>
        <taxon>Betaproteobacteria</taxon>
        <taxon>Burkholderiales</taxon>
        <taxon>Comamonadaceae</taxon>
        <taxon>Variovorax</taxon>
    </lineage>
</organism>
<name>RS17_VARPS</name>
<sequence length="89" mass="10162">MTEAKKSLKRTLIGKVVSDKRAKTVTVLVERRVKHELYGKIVAKTSKYHAHDEKGEYKLGDTIEITESRPISKTKNWVVTRLVEKAVLV</sequence>
<gene>
    <name evidence="1" type="primary">rpsQ</name>
    <name type="ordered locus">Vapar_4904</name>
</gene>
<comment type="function">
    <text evidence="1">One of the primary rRNA binding proteins, it binds specifically to the 5'-end of 16S ribosomal RNA.</text>
</comment>
<comment type="subunit">
    <text evidence="1">Part of the 30S ribosomal subunit.</text>
</comment>
<comment type="similarity">
    <text evidence="1">Belongs to the universal ribosomal protein uS17 family.</text>
</comment>
<proteinExistence type="inferred from homology"/>
<keyword id="KW-0687">Ribonucleoprotein</keyword>
<keyword id="KW-0689">Ribosomal protein</keyword>
<keyword id="KW-0694">RNA-binding</keyword>
<keyword id="KW-0699">rRNA-binding</keyword>
<reference key="1">
    <citation type="journal article" date="2011" name="J. Bacteriol.">
        <title>Complete genome sequence of the metabolically versatile plant growth-promoting endophyte, Variovorax paradoxus S110.</title>
        <authorList>
            <person name="Han J.I."/>
            <person name="Choi H.K."/>
            <person name="Lee S.W."/>
            <person name="Orwin P.M."/>
            <person name="Kim J."/>
            <person name="Laroe S.L."/>
            <person name="Kim T.G."/>
            <person name="O'Neil J."/>
            <person name="Leadbetter J.R."/>
            <person name="Lee S.Y."/>
            <person name="Hur C.G."/>
            <person name="Spain J.C."/>
            <person name="Ovchinnikova G."/>
            <person name="Goodwin L."/>
            <person name="Han C."/>
        </authorList>
    </citation>
    <scope>NUCLEOTIDE SEQUENCE [LARGE SCALE GENOMIC DNA]</scope>
    <source>
        <strain>S110</strain>
    </source>
</reference>
<protein>
    <recommendedName>
        <fullName evidence="1">Small ribosomal subunit protein uS17</fullName>
    </recommendedName>
    <alternativeName>
        <fullName evidence="2">30S ribosomal protein S17</fullName>
    </alternativeName>
</protein>
<dbReference type="EMBL" id="CP001635">
    <property type="protein sequence ID" value="ACS21508.1"/>
    <property type="molecule type" value="Genomic_DNA"/>
</dbReference>
<dbReference type="SMR" id="C5CP44"/>
<dbReference type="STRING" id="543728.Vapar_4904"/>
<dbReference type="KEGG" id="vap:Vapar_4904"/>
<dbReference type="eggNOG" id="COG0186">
    <property type="taxonomic scope" value="Bacteria"/>
</dbReference>
<dbReference type="HOGENOM" id="CLU_073626_1_1_4"/>
<dbReference type="OrthoDB" id="9811714at2"/>
<dbReference type="GO" id="GO:0022627">
    <property type="term" value="C:cytosolic small ribosomal subunit"/>
    <property type="evidence" value="ECO:0007669"/>
    <property type="project" value="TreeGrafter"/>
</dbReference>
<dbReference type="GO" id="GO:0019843">
    <property type="term" value="F:rRNA binding"/>
    <property type="evidence" value="ECO:0007669"/>
    <property type="project" value="UniProtKB-UniRule"/>
</dbReference>
<dbReference type="GO" id="GO:0003735">
    <property type="term" value="F:structural constituent of ribosome"/>
    <property type="evidence" value="ECO:0007669"/>
    <property type="project" value="InterPro"/>
</dbReference>
<dbReference type="GO" id="GO:0006412">
    <property type="term" value="P:translation"/>
    <property type="evidence" value="ECO:0007669"/>
    <property type="project" value="UniProtKB-UniRule"/>
</dbReference>
<dbReference type="CDD" id="cd00364">
    <property type="entry name" value="Ribosomal_uS17"/>
    <property type="match status" value="1"/>
</dbReference>
<dbReference type="Gene3D" id="2.40.50.140">
    <property type="entry name" value="Nucleic acid-binding proteins"/>
    <property type="match status" value="1"/>
</dbReference>
<dbReference type="HAMAP" id="MF_01345_B">
    <property type="entry name" value="Ribosomal_uS17_B"/>
    <property type="match status" value="1"/>
</dbReference>
<dbReference type="InterPro" id="IPR012340">
    <property type="entry name" value="NA-bd_OB-fold"/>
</dbReference>
<dbReference type="InterPro" id="IPR000266">
    <property type="entry name" value="Ribosomal_uS17"/>
</dbReference>
<dbReference type="InterPro" id="IPR019984">
    <property type="entry name" value="Ribosomal_uS17_bact/chlr"/>
</dbReference>
<dbReference type="InterPro" id="IPR019979">
    <property type="entry name" value="Ribosomal_uS17_CS"/>
</dbReference>
<dbReference type="NCBIfam" id="NF004123">
    <property type="entry name" value="PRK05610.1"/>
    <property type="match status" value="1"/>
</dbReference>
<dbReference type="NCBIfam" id="TIGR03635">
    <property type="entry name" value="uS17_bact"/>
    <property type="match status" value="1"/>
</dbReference>
<dbReference type="PANTHER" id="PTHR10744">
    <property type="entry name" value="40S RIBOSOMAL PROTEIN S11 FAMILY MEMBER"/>
    <property type="match status" value="1"/>
</dbReference>
<dbReference type="PANTHER" id="PTHR10744:SF1">
    <property type="entry name" value="SMALL RIBOSOMAL SUBUNIT PROTEIN US17M"/>
    <property type="match status" value="1"/>
</dbReference>
<dbReference type="Pfam" id="PF00366">
    <property type="entry name" value="Ribosomal_S17"/>
    <property type="match status" value="1"/>
</dbReference>
<dbReference type="PRINTS" id="PR00973">
    <property type="entry name" value="RIBOSOMALS17"/>
</dbReference>
<dbReference type="SUPFAM" id="SSF50249">
    <property type="entry name" value="Nucleic acid-binding proteins"/>
    <property type="match status" value="1"/>
</dbReference>
<dbReference type="PROSITE" id="PS00056">
    <property type="entry name" value="RIBOSOMAL_S17"/>
    <property type="match status" value="1"/>
</dbReference>
<accession>C5CP44</accession>
<evidence type="ECO:0000255" key="1">
    <source>
        <dbReference type="HAMAP-Rule" id="MF_01345"/>
    </source>
</evidence>
<evidence type="ECO:0000305" key="2"/>